<sequence length="166" mass="19475">MFPMVTEFMNYGQQTVRAARYIGQGFMITLSHANRLPVTIQYPYEKLITSERFRGRIHFEFDKCIACEVCVRVCPIDLPVVDWKLETDIRKKRLLNYSIDFGICIFCGNCVEYCPTNCLSMTEEYELSTYDRHELNYNQIALGRLPMSIIDDYTIRTILNLPEIKT</sequence>
<organism>
    <name type="scientific">Squamopappus skutchii</name>
    <name type="common">Podachaenium skutchii</name>
    <dbReference type="NCBI Taxonomy" id="121904"/>
    <lineage>
        <taxon>Eukaryota</taxon>
        <taxon>Viridiplantae</taxon>
        <taxon>Streptophyta</taxon>
        <taxon>Embryophyta</taxon>
        <taxon>Tracheophyta</taxon>
        <taxon>Spermatophyta</taxon>
        <taxon>Magnoliopsida</taxon>
        <taxon>eudicotyledons</taxon>
        <taxon>Gunneridae</taxon>
        <taxon>Pentapetalae</taxon>
        <taxon>asterids</taxon>
        <taxon>campanulids</taxon>
        <taxon>Asterales</taxon>
        <taxon>Asteraceae</taxon>
        <taxon>Asteroideae</taxon>
        <taxon>Heliantheae alliance</taxon>
        <taxon>Heliantheae</taxon>
        <taxon>Squamopappus</taxon>
    </lineage>
</organism>
<proteinExistence type="inferred from homology"/>
<geneLocation type="chloroplast"/>
<gene>
    <name evidence="1" type="primary">ndhI</name>
</gene>
<keyword id="KW-0004">4Fe-4S</keyword>
<keyword id="KW-0150">Chloroplast</keyword>
<keyword id="KW-0408">Iron</keyword>
<keyword id="KW-0411">Iron-sulfur</keyword>
<keyword id="KW-0472">Membrane</keyword>
<keyword id="KW-0479">Metal-binding</keyword>
<keyword id="KW-0520">NAD</keyword>
<keyword id="KW-0521">NADP</keyword>
<keyword id="KW-0934">Plastid</keyword>
<keyword id="KW-0618">Plastoquinone</keyword>
<keyword id="KW-0874">Quinone</keyword>
<keyword id="KW-0677">Repeat</keyword>
<keyword id="KW-0793">Thylakoid</keyword>
<keyword id="KW-1278">Translocase</keyword>
<evidence type="ECO:0000255" key="1">
    <source>
        <dbReference type="HAMAP-Rule" id="MF_01351"/>
    </source>
</evidence>
<comment type="function">
    <text evidence="1">NDH shuttles electrons from NAD(P)H:plastoquinone, via FMN and iron-sulfur (Fe-S) centers, to quinones in the photosynthetic chain and possibly in a chloroplast respiratory chain. The immediate electron acceptor for the enzyme in this species is believed to be plastoquinone. Couples the redox reaction to proton translocation, and thus conserves the redox energy in a proton gradient.</text>
</comment>
<comment type="catalytic activity">
    <reaction evidence="1">
        <text>a plastoquinone + NADH + (n+1) H(+)(in) = a plastoquinol + NAD(+) + n H(+)(out)</text>
        <dbReference type="Rhea" id="RHEA:42608"/>
        <dbReference type="Rhea" id="RHEA-COMP:9561"/>
        <dbReference type="Rhea" id="RHEA-COMP:9562"/>
        <dbReference type="ChEBI" id="CHEBI:15378"/>
        <dbReference type="ChEBI" id="CHEBI:17757"/>
        <dbReference type="ChEBI" id="CHEBI:57540"/>
        <dbReference type="ChEBI" id="CHEBI:57945"/>
        <dbReference type="ChEBI" id="CHEBI:62192"/>
    </reaction>
</comment>
<comment type="catalytic activity">
    <reaction evidence="1">
        <text>a plastoquinone + NADPH + (n+1) H(+)(in) = a plastoquinol + NADP(+) + n H(+)(out)</text>
        <dbReference type="Rhea" id="RHEA:42612"/>
        <dbReference type="Rhea" id="RHEA-COMP:9561"/>
        <dbReference type="Rhea" id="RHEA-COMP:9562"/>
        <dbReference type="ChEBI" id="CHEBI:15378"/>
        <dbReference type="ChEBI" id="CHEBI:17757"/>
        <dbReference type="ChEBI" id="CHEBI:57783"/>
        <dbReference type="ChEBI" id="CHEBI:58349"/>
        <dbReference type="ChEBI" id="CHEBI:62192"/>
    </reaction>
</comment>
<comment type="cofactor">
    <cofactor evidence="1">
        <name>[4Fe-4S] cluster</name>
        <dbReference type="ChEBI" id="CHEBI:49883"/>
    </cofactor>
    <text evidence="1">Binds 2 [4Fe-4S] clusters per subunit.</text>
</comment>
<comment type="subunit">
    <text evidence="1">NDH is composed of at least 16 different subunits, 5 of which are encoded in the nucleus.</text>
</comment>
<comment type="subcellular location">
    <subcellularLocation>
        <location evidence="1">Plastid</location>
        <location evidence="1">Chloroplast thylakoid membrane</location>
        <topology evidence="1">Peripheral membrane protein</topology>
    </subcellularLocation>
</comment>
<comment type="similarity">
    <text evidence="1">Belongs to the complex I 23 kDa subunit family.</text>
</comment>
<feature type="chain" id="PRO_0000250853" description="NAD(P)H-quinone oxidoreductase subunit I, chloroplastic">
    <location>
        <begin position="1"/>
        <end position="166"/>
    </location>
</feature>
<feature type="domain" description="4Fe-4S ferredoxin-type 1" evidence="1">
    <location>
        <begin position="55"/>
        <end position="84"/>
    </location>
</feature>
<feature type="domain" description="4Fe-4S ferredoxin-type 2" evidence="1">
    <location>
        <begin position="95"/>
        <end position="124"/>
    </location>
</feature>
<feature type="binding site" evidence="1">
    <location>
        <position position="64"/>
    </location>
    <ligand>
        <name>[4Fe-4S] cluster</name>
        <dbReference type="ChEBI" id="CHEBI:49883"/>
        <label>1</label>
    </ligand>
</feature>
<feature type="binding site" evidence="1">
    <location>
        <position position="67"/>
    </location>
    <ligand>
        <name>[4Fe-4S] cluster</name>
        <dbReference type="ChEBI" id="CHEBI:49883"/>
        <label>1</label>
    </ligand>
</feature>
<feature type="binding site" evidence="1">
    <location>
        <position position="70"/>
    </location>
    <ligand>
        <name>[4Fe-4S] cluster</name>
        <dbReference type="ChEBI" id="CHEBI:49883"/>
        <label>1</label>
    </ligand>
</feature>
<feature type="binding site" evidence="1">
    <location>
        <position position="74"/>
    </location>
    <ligand>
        <name>[4Fe-4S] cluster</name>
        <dbReference type="ChEBI" id="CHEBI:49883"/>
        <label>2</label>
    </ligand>
</feature>
<feature type="binding site" evidence="1">
    <location>
        <position position="104"/>
    </location>
    <ligand>
        <name>[4Fe-4S] cluster</name>
        <dbReference type="ChEBI" id="CHEBI:49883"/>
        <label>2</label>
    </ligand>
</feature>
<feature type="binding site" evidence="1">
    <location>
        <position position="107"/>
    </location>
    <ligand>
        <name>[4Fe-4S] cluster</name>
        <dbReference type="ChEBI" id="CHEBI:49883"/>
        <label>2</label>
    </ligand>
</feature>
<feature type="binding site" evidence="1">
    <location>
        <position position="110"/>
    </location>
    <ligand>
        <name>[4Fe-4S] cluster</name>
        <dbReference type="ChEBI" id="CHEBI:49883"/>
        <label>2</label>
    </ligand>
</feature>
<feature type="binding site" evidence="1">
    <location>
        <position position="114"/>
    </location>
    <ligand>
        <name>[4Fe-4S] cluster</name>
        <dbReference type="ChEBI" id="CHEBI:49883"/>
        <label>1</label>
    </ligand>
</feature>
<accession>Q8HVK9</accession>
<protein>
    <recommendedName>
        <fullName evidence="1">NAD(P)H-quinone oxidoreductase subunit I, chloroplastic</fullName>
        <ecNumber evidence="1">7.1.1.-</ecNumber>
    </recommendedName>
    <alternativeName>
        <fullName evidence="1">NAD(P)H dehydrogenase subunit I</fullName>
        <shortName evidence="1">NDH subunit I</shortName>
    </alternativeName>
    <alternativeName>
        <fullName evidence="1">NADH-plastoquinone oxidoreductase subunit I</fullName>
    </alternativeName>
</protein>
<name>NDHI_SQUKU</name>
<reference key="1">
    <citation type="submission" date="2003-01" db="EMBL/GenBank/DDBJ databases">
        <title>Chloroplast DNA phylogeny of tribe Heliantheae (Asteraceae).</title>
        <authorList>
            <person name="Panero J.L."/>
            <person name="Baldwin B.G."/>
            <person name="Schilling E.E."/>
            <person name="Clevinger J.A."/>
        </authorList>
    </citation>
    <scope>NUCLEOTIDE SEQUENCE [GENOMIC DNA]</scope>
</reference>
<dbReference type="EC" id="7.1.1.-" evidence="1"/>
<dbReference type="EMBL" id="AF383854">
    <property type="protein sequence ID" value="AAN61795.1"/>
    <property type="molecule type" value="Genomic_DNA"/>
</dbReference>
<dbReference type="SMR" id="Q8HVK9"/>
<dbReference type="GO" id="GO:0009535">
    <property type="term" value="C:chloroplast thylakoid membrane"/>
    <property type="evidence" value="ECO:0007669"/>
    <property type="project" value="UniProtKB-SubCell"/>
</dbReference>
<dbReference type="GO" id="GO:0051539">
    <property type="term" value="F:4 iron, 4 sulfur cluster binding"/>
    <property type="evidence" value="ECO:0007669"/>
    <property type="project" value="UniProtKB-KW"/>
</dbReference>
<dbReference type="GO" id="GO:0005506">
    <property type="term" value="F:iron ion binding"/>
    <property type="evidence" value="ECO:0007669"/>
    <property type="project" value="UniProtKB-UniRule"/>
</dbReference>
<dbReference type="GO" id="GO:0008137">
    <property type="term" value="F:NADH dehydrogenase (ubiquinone) activity"/>
    <property type="evidence" value="ECO:0007669"/>
    <property type="project" value="InterPro"/>
</dbReference>
<dbReference type="GO" id="GO:0048038">
    <property type="term" value="F:quinone binding"/>
    <property type="evidence" value="ECO:0007669"/>
    <property type="project" value="UniProtKB-KW"/>
</dbReference>
<dbReference type="GO" id="GO:0019684">
    <property type="term" value="P:photosynthesis, light reaction"/>
    <property type="evidence" value="ECO:0007669"/>
    <property type="project" value="UniProtKB-UniRule"/>
</dbReference>
<dbReference type="FunFam" id="3.30.70.3270:FF:000006">
    <property type="entry name" value="NAD(P)H-quinone oxidoreductase subunit I, chloroplastic"/>
    <property type="match status" value="1"/>
</dbReference>
<dbReference type="Gene3D" id="3.30.70.3270">
    <property type="match status" value="1"/>
</dbReference>
<dbReference type="HAMAP" id="MF_01351">
    <property type="entry name" value="NDH1_NuoI"/>
    <property type="match status" value="1"/>
</dbReference>
<dbReference type="InterPro" id="IPR017896">
    <property type="entry name" value="4Fe4S_Fe-S-bd"/>
</dbReference>
<dbReference type="InterPro" id="IPR017900">
    <property type="entry name" value="4Fe4S_Fe_S_CS"/>
</dbReference>
<dbReference type="InterPro" id="IPR010226">
    <property type="entry name" value="NADH_quinone_OxRdtase_chainI"/>
</dbReference>
<dbReference type="InterPro" id="IPR004497">
    <property type="entry name" value="NDHI"/>
</dbReference>
<dbReference type="NCBIfam" id="TIGR00403">
    <property type="entry name" value="ndhI"/>
    <property type="match status" value="1"/>
</dbReference>
<dbReference type="NCBIfam" id="TIGR01971">
    <property type="entry name" value="NuoI"/>
    <property type="match status" value="1"/>
</dbReference>
<dbReference type="NCBIfam" id="NF004537">
    <property type="entry name" value="PRK05888.1-3"/>
    <property type="match status" value="1"/>
</dbReference>
<dbReference type="PANTHER" id="PTHR47275">
    <property type="entry name" value="NAD(P)H-QUINONE OXIDOREDUCTASE SUBUNIT I, CHLOROPLASTIC"/>
    <property type="match status" value="1"/>
</dbReference>
<dbReference type="PANTHER" id="PTHR47275:SF1">
    <property type="entry name" value="NAD(P)H-QUINONE OXIDOREDUCTASE SUBUNIT I, CHLOROPLASTIC"/>
    <property type="match status" value="1"/>
</dbReference>
<dbReference type="Pfam" id="PF00037">
    <property type="entry name" value="Fer4"/>
    <property type="match status" value="2"/>
</dbReference>
<dbReference type="SUPFAM" id="SSF54862">
    <property type="entry name" value="4Fe-4S ferredoxins"/>
    <property type="match status" value="1"/>
</dbReference>
<dbReference type="PROSITE" id="PS00198">
    <property type="entry name" value="4FE4S_FER_1"/>
    <property type="match status" value="2"/>
</dbReference>
<dbReference type="PROSITE" id="PS51379">
    <property type="entry name" value="4FE4S_FER_2"/>
    <property type="match status" value="2"/>
</dbReference>